<organism>
    <name type="scientific">Staphylococcus aureus (strain N315)</name>
    <dbReference type="NCBI Taxonomy" id="158879"/>
    <lineage>
        <taxon>Bacteria</taxon>
        <taxon>Bacillati</taxon>
        <taxon>Bacillota</taxon>
        <taxon>Bacilli</taxon>
        <taxon>Bacillales</taxon>
        <taxon>Staphylococcaceae</taxon>
        <taxon>Staphylococcus</taxon>
    </lineage>
</organism>
<feature type="chain" id="PRO_0000344188" description="Urease accessory protein UreF">
    <location>
        <begin position="1"/>
        <end position="229"/>
    </location>
</feature>
<keyword id="KW-0143">Chaperone</keyword>
<keyword id="KW-0963">Cytoplasm</keyword>
<keyword id="KW-0996">Nickel insertion</keyword>
<sequence length="229" mass="26552">MIDHTHLRLFQFCDSQFPTGAFSHSFGLETYIQRNIIHDDHTFIAWLKMFLQEQLTYSDGLAMRLVYDALENDDTQKVLHIDKLMFVQNLPKETRVGAKQMGTRMVKLALELYNSPWIAWYHQQMQDKKAKLNPAICFTMLGHHLGVDIETIIDYYLYQNVSSLTQNAVRAIPLGQTAGQKIVTHMIPYIEETRKQIFELKEADFGMTAPGLELNQMAHENVNVRIFIS</sequence>
<proteinExistence type="inferred from homology"/>
<reference key="1">
    <citation type="journal article" date="2001" name="Lancet">
        <title>Whole genome sequencing of meticillin-resistant Staphylococcus aureus.</title>
        <authorList>
            <person name="Kuroda M."/>
            <person name="Ohta T."/>
            <person name="Uchiyama I."/>
            <person name="Baba T."/>
            <person name="Yuzawa H."/>
            <person name="Kobayashi I."/>
            <person name="Cui L."/>
            <person name="Oguchi A."/>
            <person name="Aoki K."/>
            <person name="Nagai Y."/>
            <person name="Lian J.-Q."/>
            <person name="Ito T."/>
            <person name="Kanamori M."/>
            <person name="Matsumaru H."/>
            <person name="Maruyama A."/>
            <person name="Murakami H."/>
            <person name="Hosoyama A."/>
            <person name="Mizutani-Ui Y."/>
            <person name="Takahashi N.K."/>
            <person name="Sawano T."/>
            <person name="Inoue R."/>
            <person name="Kaito C."/>
            <person name="Sekimizu K."/>
            <person name="Hirakawa H."/>
            <person name="Kuhara S."/>
            <person name="Goto S."/>
            <person name="Yabuzaki J."/>
            <person name="Kanehisa M."/>
            <person name="Yamashita A."/>
            <person name="Oshima K."/>
            <person name="Furuya K."/>
            <person name="Yoshino C."/>
            <person name="Shiba T."/>
            <person name="Hattori M."/>
            <person name="Ogasawara N."/>
            <person name="Hayashi H."/>
            <person name="Hiramatsu K."/>
        </authorList>
    </citation>
    <scope>NUCLEOTIDE SEQUENCE [LARGE SCALE GENOMIC DNA]</scope>
    <source>
        <strain>N315</strain>
    </source>
</reference>
<protein>
    <recommendedName>
        <fullName evidence="1">Urease accessory protein UreF</fullName>
    </recommendedName>
</protein>
<dbReference type="EMBL" id="BA000018">
    <property type="protein sequence ID" value="BAB43384.1"/>
    <property type="molecule type" value="Genomic_DNA"/>
</dbReference>
<dbReference type="PIR" id="G90027">
    <property type="entry name" value="G90027"/>
</dbReference>
<dbReference type="RefSeq" id="WP_000565254.1">
    <property type="nucleotide sequence ID" value="NC_002745.2"/>
</dbReference>
<dbReference type="SMR" id="Q7A428"/>
<dbReference type="EnsemblBacteria" id="BAB43384">
    <property type="protein sequence ID" value="BAB43384"/>
    <property type="gene ID" value="BAB43384"/>
</dbReference>
<dbReference type="KEGG" id="sau:SA2086"/>
<dbReference type="HOGENOM" id="CLU_049215_4_2_9"/>
<dbReference type="GO" id="GO:0005737">
    <property type="term" value="C:cytoplasm"/>
    <property type="evidence" value="ECO:0007669"/>
    <property type="project" value="UniProtKB-SubCell"/>
</dbReference>
<dbReference type="GO" id="GO:0016151">
    <property type="term" value="F:nickel cation binding"/>
    <property type="evidence" value="ECO:0007669"/>
    <property type="project" value="UniProtKB-UniRule"/>
</dbReference>
<dbReference type="Gene3D" id="1.10.4190.10">
    <property type="entry name" value="Urease accessory protein UreF"/>
    <property type="match status" value="1"/>
</dbReference>
<dbReference type="HAMAP" id="MF_01385">
    <property type="entry name" value="UreF"/>
    <property type="match status" value="1"/>
</dbReference>
<dbReference type="InterPro" id="IPR002639">
    <property type="entry name" value="UreF"/>
</dbReference>
<dbReference type="InterPro" id="IPR038277">
    <property type="entry name" value="UreF_sf"/>
</dbReference>
<dbReference type="PANTHER" id="PTHR33620">
    <property type="entry name" value="UREASE ACCESSORY PROTEIN F"/>
    <property type="match status" value="1"/>
</dbReference>
<dbReference type="PANTHER" id="PTHR33620:SF1">
    <property type="entry name" value="UREASE ACCESSORY PROTEIN F"/>
    <property type="match status" value="1"/>
</dbReference>
<dbReference type="Pfam" id="PF01730">
    <property type="entry name" value="UreF"/>
    <property type="match status" value="1"/>
</dbReference>
<dbReference type="PIRSF" id="PIRSF009467">
    <property type="entry name" value="Ureas_acces_UreF"/>
    <property type="match status" value="1"/>
</dbReference>
<gene>
    <name evidence="1" type="primary">ureF</name>
    <name type="ordered locus">SA2086</name>
</gene>
<accession>Q7A428</accession>
<evidence type="ECO:0000255" key="1">
    <source>
        <dbReference type="HAMAP-Rule" id="MF_01385"/>
    </source>
</evidence>
<comment type="function">
    <text evidence="1">Required for maturation of urease via the functional incorporation of the urease nickel metallocenter.</text>
</comment>
<comment type="subunit">
    <text evidence="1">UreD, UreF and UreG form a complex that acts as a GTP-hydrolysis-dependent molecular chaperone, activating the urease apoprotein by helping to assemble the nickel containing metallocenter of UreC. The UreE protein probably delivers the nickel.</text>
</comment>
<comment type="subcellular location">
    <subcellularLocation>
        <location evidence="1">Cytoplasm</location>
    </subcellularLocation>
</comment>
<comment type="similarity">
    <text evidence="1">Belongs to the UreF family.</text>
</comment>
<name>UREF_STAAN</name>